<sequence length="502" mass="56251">MAPLKLNNKNLSQIAAAGETQVKVPTYKRGGDVKEGIVHVGVGGFHRAHLAVYVDQLMQKHGVTDYAICGVGLQPFDAAMRDALGSQDHLYTVIERSAKGSFAHVVGSINSYLFAPDNREAVIAKMAHPDTHIVSLTITESGYYYNENTHELQSEHPDIQFDLQPANEKSPRTTFGFLYAALARRYQQGLKPFTVMSCDNMQKNGSITRHMLESFARLRNPEIAKWIAEQGAFPNAMVDRITPQTSATDKTALADNFAIEDSWPVVTEPFMQWVIEDQFSDGRPPFEKVGAQVVKNVHDVEEFEKHKLRLLNGSHSAIGYPGQLAGFKYVHEVMENPLFSKFVWQMMQDEVKPLLPEIPGVNIDEYCKTLIERFSNPTIMDQLPRICLNASGKIPQFIMPSIAEAIWVTGPFRRLCFVAAAWFHYINGVDDSGKKFEVDDPMREELQAKARAGGTSPAELLSIKSLFGDDLRGDKRFLQEITKAMEDIARDGILKTLPKYID</sequence>
<name>M2DH_ASPOR</name>
<gene>
    <name type="ORF">AO090011000230</name>
</gene>
<protein>
    <recommendedName>
        <fullName>Mannitol 2-dehydrogenase</fullName>
        <shortName>M2DH</shortName>
        <shortName>MDH</shortName>
        <ecNumber>1.1.1.67</ecNumber>
    </recommendedName>
</protein>
<feature type="chain" id="PRO_0000371542" description="Mannitol 2-dehydrogenase">
    <location>
        <begin position="1"/>
        <end position="502"/>
    </location>
</feature>
<feature type="binding site" evidence="1">
    <location>
        <begin position="37"/>
        <end position="48"/>
    </location>
    <ligand>
        <name>NAD(+)</name>
        <dbReference type="ChEBI" id="CHEBI:57540"/>
    </ligand>
</feature>
<reference key="1">
    <citation type="journal article" date="2005" name="Nature">
        <title>Genome sequencing and analysis of Aspergillus oryzae.</title>
        <authorList>
            <person name="Machida M."/>
            <person name="Asai K."/>
            <person name="Sano M."/>
            <person name="Tanaka T."/>
            <person name="Kumagai T."/>
            <person name="Terai G."/>
            <person name="Kusumoto K."/>
            <person name="Arima T."/>
            <person name="Akita O."/>
            <person name="Kashiwagi Y."/>
            <person name="Abe K."/>
            <person name="Gomi K."/>
            <person name="Horiuchi H."/>
            <person name="Kitamoto K."/>
            <person name="Kobayashi T."/>
            <person name="Takeuchi M."/>
            <person name="Denning D.W."/>
            <person name="Galagan J.E."/>
            <person name="Nierman W.C."/>
            <person name="Yu J."/>
            <person name="Archer D.B."/>
            <person name="Bennett J.W."/>
            <person name="Bhatnagar D."/>
            <person name="Cleveland T.E."/>
            <person name="Fedorova N.D."/>
            <person name="Gotoh O."/>
            <person name="Horikawa H."/>
            <person name="Hosoyama A."/>
            <person name="Ichinomiya M."/>
            <person name="Igarashi R."/>
            <person name="Iwashita K."/>
            <person name="Juvvadi P.R."/>
            <person name="Kato M."/>
            <person name="Kato Y."/>
            <person name="Kin T."/>
            <person name="Kokubun A."/>
            <person name="Maeda H."/>
            <person name="Maeyama N."/>
            <person name="Maruyama J."/>
            <person name="Nagasaki H."/>
            <person name="Nakajima T."/>
            <person name="Oda K."/>
            <person name="Okada K."/>
            <person name="Paulsen I."/>
            <person name="Sakamoto K."/>
            <person name="Sawano T."/>
            <person name="Takahashi M."/>
            <person name="Takase K."/>
            <person name="Terabayashi Y."/>
            <person name="Wortman J.R."/>
            <person name="Yamada O."/>
            <person name="Yamagata Y."/>
            <person name="Anazawa H."/>
            <person name="Hata Y."/>
            <person name="Koide Y."/>
            <person name="Komori T."/>
            <person name="Koyama Y."/>
            <person name="Minetoki T."/>
            <person name="Suharnan S."/>
            <person name="Tanaka A."/>
            <person name="Isono K."/>
            <person name="Kuhara S."/>
            <person name="Ogasawara N."/>
            <person name="Kikuchi H."/>
        </authorList>
    </citation>
    <scope>NUCLEOTIDE SEQUENCE [LARGE SCALE GENOMIC DNA]</scope>
    <source>
        <strain>ATCC 42149 / RIB 40</strain>
    </source>
</reference>
<comment type="function">
    <text evidence="1">Catalyzes the NAD(H)-dependent interconversion of D-fructose and D-mannitol in the mannitol metabolic pathway.</text>
</comment>
<comment type="catalytic activity">
    <reaction>
        <text>D-mannitol + NAD(+) = D-fructose + NADH + H(+)</text>
        <dbReference type="Rhea" id="RHEA:12084"/>
        <dbReference type="ChEBI" id="CHEBI:15378"/>
        <dbReference type="ChEBI" id="CHEBI:16899"/>
        <dbReference type="ChEBI" id="CHEBI:37721"/>
        <dbReference type="ChEBI" id="CHEBI:57540"/>
        <dbReference type="ChEBI" id="CHEBI:57945"/>
        <dbReference type="EC" id="1.1.1.67"/>
    </reaction>
</comment>
<comment type="subunit">
    <text evidence="1">Monomer.</text>
</comment>
<comment type="similarity">
    <text evidence="2">Belongs to the mannitol dehydrogenase family.</text>
</comment>
<evidence type="ECO:0000250" key="1"/>
<evidence type="ECO:0000305" key="2"/>
<dbReference type="EC" id="1.1.1.67"/>
<dbReference type="EMBL" id="BA000055">
    <property type="protein sequence ID" value="BAE64765.1"/>
    <property type="molecule type" value="Genomic_DNA"/>
</dbReference>
<dbReference type="RefSeq" id="XP_001825898.1">
    <property type="nucleotide sequence ID" value="XM_001825846.3"/>
</dbReference>
<dbReference type="SMR" id="Q2U100"/>
<dbReference type="STRING" id="510516.Q2U100"/>
<dbReference type="EnsemblFungi" id="BAE64765">
    <property type="protein sequence ID" value="BAE64765"/>
    <property type="gene ID" value="AO090011000230"/>
</dbReference>
<dbReference type="GeneID" id="5998001"/>
<dbReference type="KEGG" id="aor:AO090011000230"/>
<dbReference type="VEuPathDB" id="FungiDB:AO090011000230"/>
<dbReference type="HOGENOM" id="CLU_027324_0_1_1"/>
<dbReference type="OMA" id="IVASWAR"/>
<dbReference type="OrthoDB" id="21633at5052"/>
<dbReference type="Proteomes" id="UP000006564">
    <property type="component" value="Chromosome 7"/>
</dbReference>
<dbReference type="GO" id="GO:0005576">
    <property type="term" value="C:extracellular region"/>
    <property type="evidence" value="ECO:0000314"/>
    <property type="project" value="AspGD"/>
</dbReference>
<dbReference type="GO" id="GO:0050086">
    <property type="term" value="F:mannitol 2-dehydrogenase activity"/>
    <property type="evidence" value="ECO:0007669"/>
    <property type="project" value="UniProtKB-EC"/>
</dbReference>
<dbReference type="GO" id="GO:0046029">
    <property type="term" value="F:mannitol dehydrogenase activity"/>
    <property type="evidence" value="ECO:0007669"/>
    <property type="project" value="TreeGrafter"/>
</dbReference>
<dbReference type="FunFam" id="3.40.50.720:FF:000129">
    <property type="entry name" value="D-mannonate oxidoreductase"/>
    <property type="match status" value="1"/>
</dbReference>
<dbReference type="FunFam" id="1.10.1040.10:FF:000028">
    <property type="entry name" value="Mannitol 2-dehydrogenase"/>
    <property type="match status" value="1"/>
</dbReference>
<dbReference type="Gene3D" id="1.10.1040.10">
    <property type="entry name" value="N-(1-d-carboxylethyl)-l-norvaline Dehydrogenase, domain 2"/>
    <property type="match status" value="1"/>
</dbReference>
<dbReference type="Gene3D" id="3.40.50.720">
    <property type="entry name" value="NAD(P)-binding Rossmann-like Domain"/>
    <property type="match status" value="1"/>
</dbReference>
<dbReference type="InterPro" id="IPR008927">
    <property type="entry name" value="6-PGluconate_DH-like_C_sf"/>
</dbReference>
<dbReference type="InterPro" id="IPR013328">
    <property type="entry name" value="6PGD_dom2"/>
</dbReference>
<dbReference type="InterPro" id="IPR000669">
    <property type="entry name" value="Mannitol_DH"/>
</dbReference>
<dbReference type="InterPro" id="IPR050988">
    <property type="entry name" value="Mannitol_DH/Oxidoreductase"/>
</dbReference>
<dbReference type="InterPro" id="IPR013118">
    <property type="entry name" value="Mannitol_DH_C"/>
</dbReference>
<dbReference type="InterPro" id="IPR013131">
    <property type="entry name" value="Mannitol_DH_N"/>
</dbReference>
<dbReference type="InterPro" id="IPR036291">
    <property type="entry name" value="NAD(P)-bd_dom_sf"/>
</dbReference>
<dbReference type="PANTHER" id="PTHR43362:SF1">
    <property type="entry name" value="MANNITOL DEHYDROGENASE 2-RELATED"/>
    <property type="match status" value="1"/>
</dbReference>
<dbReference type="PANTHER" id="PTHR43362">
    <property type="entry name" value="MANNITOL DEHYDROGENASE DSF1-RELATED"/>
    <property type="match status" value="1"/>
</dbReference>
<dbReference type="Pfam" id="PF01232">
    <property type="entry name" value="Mannitol_dh"/>
    <property type="match status" value="1"/>
</dbReference>
<dbReference type="Pfam" id="PF08125">
    <property type="entry name" value="Mannitol_dh_C"/>
    <property type="match status" value="1"/>
</dbReference>
<dbReference type="PRINTS" id="PR00084">
    <property type="entry name" value="MTLDHDRGNASE"/>
</dbReference>
<dbReference type="SUPFAM" id="SSF48179">
    <property type="entry name" value="6-phosphogluconate dehydrogenase C-terminal domain-like"/>
    <property type="match status" value="1"/>
</dbReference>
<dbReference type="SUPFAM" id="SSF51735">
    <property type="entry name" value="NAD(P)-binding Rossmann-fold domains"/>
    <property type="match status" value="1"/>
</dbReference>
<proteinExistence type="inferred from homology"/>
<keyword id="KW-0520">NAD</keyword>
<keyword id="KW-0560">Oxidoreductase</keyword>
<keyword id="KW-1185">Reference proteome</keyword>
<accession>Q2U100</accession>
<organism>
    <name type="scientific">Aspergillus oryzae (strain ATCC 42149 / RIB 40)</name>
    <name type="common">Yellow koji mold</name>
    <dbReference type="NCBI Taxonomy" id="510516"/>
    <lineage>
        <taxon>Eukaryota</taxon>
        <taxon>Fungi</taxon>
        <taxon>Dikarya</taxon>
        <taxon>Ascomycota</taxon>
        <taxon>Pezizomycotina</taxon>
        <taxon>Eurotiomycetes</taxon>
        <taxon>Eurotiomycetidae</taxon>
        <taxon>Eurotiales</taxon>
        <taxon>Aspergillaceae</taxon>
        <taxon>Aspergillus</taxon>
        <taxon>Aspergillus subgen. Circumdati</taxon>
    </lineage>
</organism>